<accession>C5BLG1</accession>
<keyword id="KW-0227">DNA damage</keyword>
<keyword id="KW-0234">DNA repair</keyword>
<keyword id="KW-0238">DNA-binding</keyword>
<keyword id="KW-0326">Glycosidase</keyword>
<keyword id="KW-0378">Hydrolase</keyword>
<keyword id="KW-0456">Lyase</keyword>
<keyword id="KW-0479">Metal-binding</keyword>
<keyword id="KW-0511">Multifunctional enzyme</keyword>
<keyword id="KW-1185">Reference proteome</keyword>
<keyword id="KW-0862">Zinc</keyword>
<keyword id="KW-0863">Zinc-finger</keyword>
<comment type="function">
    <text evidence="2">Involved in base excision repair of DNA damaged by oxidation or by mutagenic agents. Acts as a DNA glycosylase that recognizes and removes damaged bases. Has a preference for oxidized purines, such as 7,8-dihydro-8-oxoguanine (8-oxoG). Has AP (apurinic/apyrimidinic) lyase activity and introduces nicks in the DNA strand. Cleaves the DNA backbone by beta-delta elimination to generate a single-strand break at the site of the removed base with both 3'- and 5'-phosphates.</text>
</comment>
<comment type="catalytic activity">
    <reaction evidence="2">
        <text>Hydrolysis of DNA containing ring-opened 7-methylguanine residues, releasing 2,6-diamino-4-hydroxy-5-(N-methyl)formamidopyrimidine.</text>
        <dbReference type="EC" id="3.2.2.23"/>
    </reaction>
</comment>
<comment type="catalytic activity">
    <reaction evidence="2">
        <text>2'-deoxyribonucleotide-(2'-deoxyribose 5'-phosphate)-2'-deoxyribonucleotide-DNA = a 3'-end 2'-deoxyribonucleotide-(2,3-dehydro-2,3-deoxyribose 5'-phosphate)-DNA + a 5'-end 5'-phospho-2'-deoxyribonucleoside-DNA + H(+)</text>
        <dbReference type="Rhea" id="RHEA:66592"/>
        <dbReference type="Rhea" id="RHEA-COMP:13180"/>
        <dbReference type="Rhea" id="RHEA-COMP:16897"/>
        <dbReference type="Rhea" id="RHEA-COMP:17067"/>
        <dbReference type="ChEBI" id="CHEBI:15378"/>
        <dbReference type="ChEBI" id="CHEBI:136412"/>
        <dbReference type="ChEBI" id="CHEBI:157695"/>
        <dbReference type="ChEBI" id="CHEBI:167181"/>
        <dbReference type="EC" id="4.2.99.18"/>
    </reaction>
</comment>
<comment type="cofactor">
    <cofactor evidence="2">
        <name>Zn(2+)</name>
        <dbReference type="ChEBI" id="CHEBI:29105"/>
    </cofactor>
    <text evidence="2">Binds 1 zinc ion per subunit.</text>
</comment>
<comment type="subunit">
    <text evidence="2">Monomer.</text>
</comment>
<comment type="similarity">
    <text evidence="2">Belongs to the FPG family.</text>
</comment>
<sequence length="272" mass="30375">MPELPEVETTRRGIAPHILHHPITAVTLRHTQLRWPIDKALSRNLPGRTLVRADRRGKYLLLAVDDGRTLIWHLGMSGSLRIVEPTEPPGKHDHIDLRFAHGRVLRYHDPRRFGAFLATADDPAQHALICHLGPEPLTDDFNGEYLYERSRKRSTAVKSWIMDSRVVVGVGNIYANESLFLAKIHPLRAAGKLTRPACHRLADIIKAVLARSITQGGTTLRDFVGGDGKPGYFAQQLNVYGRGGEPCPVCAKPLTEKPLSQRTTVYCTHCQN</sequence>
<reference key="1">
    <citation type="journal article" date="2009" name="PLoS ONE">
        <title>The complete genome of Teredinibacter turnerae T7901: an intracellular endosymbiont of marine wood-boring bivalves (shipworms).</title>
        <authorList>
            <person name="Yang J.C."/>
            <person name="Madupu R."/>
            <person name="Durkin A.S."/>
            <person name="Ekborg N.A."/>
            <person name="Pedamallu C.S."/>
            <person name="Hostetler J.B."/>
            <person name="Radune D."/>
            <person name="Toms B.S."/>
            <person name="Henrissat B."/>
            <person name="Coutinho P.M."/>
            <person name="Schwarz S."/>
            <person name="Field L."/>
            <person name="Trindade-Silva A.E."/>
            <person name="Soares C.A.G."/>
            <person name="Elshahawi S."/>
            <person name="Hanora A."/>
            <person name="Schmidt E.W."/>
            <person name="Haygood M.G."/>
            <person name="Posfai J."/>
            <person name="Benner J."/>
            <person name="Madinger C."/>
            <person name="Nove J."/>
            <person name="Anton B."/>
            <person name="Chaudhary K."/>
            <person name="Foster J."/>
            <person name="Holman A."/>
            <person name="Kumar S."/>
            <person name="Lessard P.A."/>
            <person name="Luyten Y.A."/>
            <person name="Slatko B."/>
            <person name="Wood N."/>
            <person name="Wu B."/>
            <person name="Teplitski M."/>
            <person name="Mougous J.D."/>
            <person name="Ward N."/>
            <person name="Eisen J.A."/>
            <person name="Badger J.H."/>
            <person name="Distel D.L."/>
        </authorList>
    </citation>
    <scope>NUCLEOTIDE SEQUENCE [LARGE SCALE GENOMIC DNA]</scope>
    <source>
        <strain>ATCC 39867 / T7901</strain>
    </source>
</reference>
<evidence type="ECO:0000250" key="1"/>
<evidence type="ECO:0000255" key="2">
    <source>
        <dbReference type="HAMAP-Rule" id="MF_00103"/>
    </source>
</evidence>
<protein>
    <recommendedName>
        <fullName evidence="2">Formamidopyrimidine-DNA glycosylase</fullName>
        <shortName evidence="2">Fapy-DNA glycosylase</shortName>
        <ecNumber evidence="2">3.2.2.23</ecNumber>
    </recommendedName>
    <alternativeName>
        <fullName evidence="2">DNA-(apurinic or apyrimidinic site) lyase MutM</fullName>
        <shortName evidence="2">AP lyase MutM</shortName>
        <ecNumber evidence="2">4.2.99.18</ecNumber>
    </alternativeName>
</protein>
<name>FPG_TERTT</name>
<dbReference type="EC" id="3.2.2.23" evidence="2"/>
<dbReference type="EC" id="4.2.99.18" evidence="2"/>
<dbReference type="EMBL" id="CP001614">
    <property type="protein sequence ID" value="ACR12438.1"/>
    <property type="molecule type" value="Genomic_DNA"/>
</dbReference>
<dbReference type="RefSeq" id="WP_015818550.1">
    <property type="nucleotide sequence ID" value="NC_012997.1"/>
</dbReference>
<dbReference type="SMR" id="C5BLG1"/>
<dbReference type="STRING" id="377629.TERTU_0178"/>
<dbReference type="KEGG" id="ttu:TERTU_0178"/>
<dbReference type="eggNOG" id="COG0266">
    <property type="taxonomic scope" value="Bacteria"/>
</dbReference>
<dbReference type="HOGENOM" id="CLU_038423_1_1_6"/>
<dbReference type="OrthoDB" id="9800855at2"/>
<dbReference type="Proteomes" id="UP000009080">
    <property type="component" value="Chromosome"/>
</dbReference>
<dbReference type="GO" id="GO:0034039">
    <property type="term" value="F:8-oxo-7,8-dihydroguanine DNA N-glycosylase activity"/>
    <property type="evidence" value="ECO:0007669"/>
    <property type="project" value="TreeGrafter"/>
</dbReference>
<dbReference type="GO" id="GO:0140078">
    <property type="term" value="F:class I DNA-(apurinic or apyrimidinic site) endonuclease activity"/>
    <property type="evidence" value="ECO:0007669"/>
    <property type="project" value="UniProtKB-EC"/>
</dbReference>
<dbReference type="GO" id="GO:0003684">
    <property type="term" value="F:damaged DNA binding"/>
    <property type="evidence" value="ECO:0007669"/>
    <property type="project" value="InterPro"/>
</dbReference>
<dbReference type="GO" id="GO:0008270">
    <property type="term" value="F:zinc ion binding"/>
    <property type="evidence" value="ECO:0007669"/>
    <property type="project" value="UniProtKB-UniRule"/>
</dbReference>
<dbReference type="GO" id="GO:0006284">
    <property type="term" value="P:base-excision repair"/>
    <property type="evidence" value="ECO:0007669"/>
    <property type="project" value="InterPro"/>
</dbReference>
<dbReference type="CDD" id="cd08966">
    <property type="entry name" value="EcFpg-like_N"/>
    <property type="match status" value="1"/>
</dbReference>
<dbReference type="FunFam" id="1.10.8.50:FF:000003">
    <property type="entry name" value="Formamidopyrimidine-DNA glycosylase"/>
    <property type="match status" value="1"/>
</dbReference>
<dbReference type="FunFam" id="3.20.190.10:FF:000001">
    <property type="entry name" value="Formamidopyrimidine-DNA glycosylase"/>
    <property type="match status" value="1"/>
</dbReference>
<dbReference type="Gene3D" id="1.10.8.50">
    <property type="match status" value="1"/>
</dbReference>
<dbReference type="Gene3D" id="3.20.190.10">
    <property type="entry name" value="MutM-like, N-terminal"/>
    <property type="match status" value="1"/>
</dbReference>
<dbReference type="HAMAP" id="MF_00103">
    <property type="entry name" value="Fapy_DNA_glycosyl"/>
    <property type="match status" value="1"/>
</dbReference>
<dbReference type="InterPro" id="IPR015886">
    <property type="entry name" value="DNA_glyclase/AP_lyase_DNA-bd"/>
</dbReference>
<dbReference type="InterPro" id="IPR015887">
    <property type="entry name" value="DNA_glyclase_Znf_dom_DNA_BS"/>
</dbReference>
<dbReference type="InterPro" id="IPR020629">
    <property type="entry name" value="Formamido-pyr_DNA_Glyclase"/>
</dbReference>
<dbReference type="InterPro" id="IPR012319">
    <property type="entry name" value="FPG_cat"/>
</dbReference>
<dbReference type="InterPro" id="IPR035937">
    <property type="entry name" value="MutM-like_N-ter"/>
</dbReference>
<dbReference type="InterPro" id="IPR010979">
    <property type="entry name" value="Ribosomal_uS13-like_H2TH"/>
</dbReference>
<dbReference type="InterPro" id="IPR000214">
    <property type="entry name" value="Znf_DNA_glyclase/AP_lyase"/>
</dbReference>
<dbReference type="InterPro" id="IPR010663">
    <property type="entry name" value="Znf_FPG/IleRS"/>
</dbReference>
<dbReference type="NCBIfam" id="TIGR00577">
    <property type="entry name" value="fpg"/>
    <property type="match status" value="1"/>
</dbReference>
<dbReference type="NCBIfam" id="NF002211">
    <property type="entry name" value="PRK01103.1"/>
    <property type="match status" value="1"/>
</dbReference>
<dbReference type="PANTHER" id="PTHR22993">
    <property type="entry name" value="FORMAMIDOPYRIMIDINE-DNA GLYCOSYLASE"/>
    <property type="match status" value="1"/>
</dbReference>
<dbReference type="PANTHER" id="PTHR22993:SF9">
    <property type="entry name" value="FORMAMIDOPYRIMIDINE-DNA GLYCOSYLASE"/>
    <property type="match status" value="1"/>
</dbReference>
<dbReference type="Pfam" id="PF01149">
    <property type="entry name" value="Fapy_DNA_glyco"/>
    <property type="match status" value="1"/>
</dbReference>
<dbReference type="Pfam" id="PF06831">
    <property type="entry name" value="H2TH"/>
    <property type="match status" value="1"/>
</dbReference>
<dbReference type="Pfam" id="PF06827">
    <property type="entry name" value="zf-FPG_IleRS"/>
    <property type="match status" value="1"/>
</dbReference>
<dbReference type="SMART" id="SM00898">
    <property type="entry name" value="Fapy_DNA_glyco"/>
    <property type="match status" value="1"/>
</dbReference>
<dbReference type="SMART" id="SM01232">
    <property type="entry name" value="H2TH"/>
    <property type="match status" value="1"/>
</dbReference>
<dbReference type="SUPFAM" id="SSF57716">
    <property type="entry name" value="Glucocorticoid receptor-like (DNA-binding domain)"/>
    <property type="match status" value="1"/>
</dbReference>
<dbReference type="SUPFAM" id="SSF81624">
    <property type="entry name" value="N-terminal domain of MutM-like DNA repair proteins"/>
    <property type="match status" value="1"/>
</dbReference>
<dbReference type="SUPFAM" id="SSF46946">
    <property type="entry name" value="S13-like H2TH domain"/>
    <property type="match status" value="1"/>
</dbReference>
<dbReference type="PROSITE" id="PS51068">
    <property type="entry name" value="FPG_CAT"/>
    <property type="match status" value="1"/>
</dbReference>
<dbReference type="PROSITE" id="PS01242">
    <property type="entry name" value="ZF_FPG_1"/>
    <property type="match status" value="1"/>
</dbReference>
<dbReference type="PROSITE" id="PS51066">
    <property type="entry name" value="ZF_FPG_2"/>
    <property type="match status" value="1"/>
</dbReference>
<gene>
    <name evidence="2" type="primary">mutM</name>
    <name evidence="2" type="synonym">fpg</name>
    <name type="ordered locus">TERTU_0178</name>
</gene>
<feature type="initiator methionine" description="Removed" evidence="1">
    <location>
        <position position="1"/>
    </location>
</feature>
<feature type="chain" id="PRO_1000202831" description="Formamidopyrimidine-DNA glycosylase">
    <location>
        <begin position="2"/>
        <end position="272"/>
    </location>
</feature>
<feature type="zinc finger region" description="FPG-type" evidence="2">
    <location>
        <begin position="238"/>
        <end position="272"/>
    </location>
</feature>
<feature type="active site" description="Schiff-base intermediate with DNA" evidence="2">
    <location>
        <position position="2"/>
    </location>
</feature>
<feature type="active site" description="Proton donor" evidence="2">
    <location>
        <position position="3"/>
    </location>
</feature>
<feature type="active site" description="Proton donor; for beta-elimination activity" evidence="2">
    <location>
        <position position="58"/>
    </location>
</feature>
<feature type="active site" description="Proton donor; for delta-elimination activity" evidence="2">
    <location>
        <position position="262"/>
    </location>
</feature>
<feature type="binding site" evidence="2">
    <location>
        <position position="92"/>
    </location>
    <ligand>
        <name>DNA</name>
        <dbReference type="ChEBI" id="CHEBI:16991"/>
    </ligand>
</feature>
<feature type="binding site" evidence="2">
    <location>
        <position position="111"/>
    </location>
    <ligand>
        <name>DNA</name>
        <dbReference type="ChEBI" id="CHEBI:16991"/>
    </ligand>
</feature>
<feature type="binding site" evidence="2">
    <location>
        <position position="153"/>
    </location>
    <ligand>
        <name>DNA</name>
        <dbReference type="ChEBI" id="CHEBI:16991"/>
    </ligand>
</feature>
<organism>
    <name type="scientific">Teredinibacter turnerae (strain ATCC 39867 / T7901)</name>
    <dbReference type="NCBI Taxonomy" id="377629"/>
    <lineage>
        <taxon>Bacteria</taxon>
        <taxon>Pseudomonadati</taxon>
        <taxon>Pseudomonadota</taxon>
        <taxon>Gammaproteobacteria</taxon>
        <taxon>Cellvibrionales</taxon>
        <taxon>Cellvibrionaceae</taxon>
        <taxon>Teredinibacter</taxon>
    </lineage>
</organism>
<proteinExistence type="inferred from homology"/>